<organism>
    <name type="scientific">Syntrophobacter fumaroxidans (strain DSM 10017 / MPOB)</name>
    <dbReference type="NCBI Taxonomy" id="335543"/>
    <lineage>
        <taxon>Bacteria</taxon>
        <taxon>Pseudomonadati</taxon>
        <taxon>Thermodesulfobacteriota</taxon>
        <taxon>Syntrophobacteria</taxon>
        <taxon>Syntrophobacterales</taxon>
        <taxon>Syntrophobacteraceae</taxon>
        <taxon>Syntrophobacter</taxon>
    </lineage>
</organism>
<gene>
    <name evidence="1" type="primary">mntP</name>
    <name type="ordered locus">Sfum_0431</name>
</gene>
<feature type="chain" id="PRO_0000296939" description="Putative manganese efflux pump MntP">
    <location>
        <begin position="1"/>
        <end position="182"/>
    </location>
</feature>
<feature type="transmembrane region" description="Helical" evidence="1">
    <location>
        <begin position="6"/>
        <end position="26"/>
    </location>
</feature>
<feature type="transmembrane region" description="Helical" evidence="1">
    <location>
        <begin position="37"/>
        <end position="57"/>
    </location>
</feature>
<feature type="transmembrane region" description="Helical" evidence="1">
    <location>
        <begin position="59"/>
        <end position="79"/>
    </location>
</feature>
<feature type="transmembrane region" description="Helical" evidence="1">
    <location>
        <begin position="104"/>
        <end position="126"/>
    </location>
</feature>
<feature type="transmembrane region" description="Helical" evidence="1">
    <location>
        <begin position="131"/>
        <end position="149"/>
    </location>
</feature>
<feature type="transmembrane region" description="Helical" evidence="1">
    <location>
        <begin position="164"/>
        <end position="181"/>
    </location>
</feature>
<proteinExistence type="inferred from homology"/>
<dbReference type="EMBL" id="CP000478">
    <property type="protein sequence ID" value="ABK16131.1"/>
    <property type="molecule type" value="Genomic_DNA"/>
</dbReference>
<dbReference type="RefSeq" id="WP_011697304.1">
    <property type="nucleotide sequence ID" value="NC_008554.1"/>
</dbReference>
<dbReference type="FunCoup" id="A0LFC9">
    <property type="interactions" value="54"/>
</dbReference>
<dbReference type="STRING" id="335543.Sfum_0431"/>
<dbReference type="KEGG" id="sfu:Sfum_0431"/>
<dbReference type="eggNOG" id="COG1971">
    <property type="taxonomic scope" value="Bacteria"/>
</dbReference>
<dbReference type="HOGENOM" id="CLU_096410_3_0_7"/>
<dbReference type="InParanoid" id="A0LFC9"/>
<dbReference type="OrthoDB" id="9811590at2"/>
<dbReference type="Proteomes" id="UP000001784">
    <property type="component" value="Chromosome"/>
</dbReference>
<dbReference type="GO" id="GO:0005886">
    <property type="term" value="C:plasma membrane"/>
    <property type="evidence" value="ECO:0007669"/>
    <property type="project" value="UniProtKB-SubCell"/>
</dbReference>
<dbReference type="GO" id="GO:0005384">
    <property type="term" value="F:manganese ion transmembrane transporter activity"/>
    <property type="evidence" value="ECO:0007669"/>
    <property type="project" value="UniProtKB-UniRule"/>
</dbReference>
<dbReference type="HAMAP" id="MF_01521">
    <property type="entry name" value="MntP_pump"/>
    <property type="match status" value="1"/>
</dbReference>
<dbReference type="InterPro" id="IPR003810">
    <property type="entry name" value="Mntp/YtaF"/>
</dbReference>
<dbReference type="InterPro" id="IPR022929">
    <property type="entry name" value="Put_MntP"/>
</dbReference>
<dbReference type="PANTHER" id="PTHR35529">
    <property type="entry name" value="MANGANESE EFFLUX PUMP MNTP-RELATED"/>
    <property type="match status" value="1"/>
</dbReference>
<dbReference type="PANTHER" id="PTHR35529:SF1">
    <property type="entry name" value="MANGANESE EFFLUX PUMP MNTP-RELATED"/>
    <property type="match status" value="1"/>
</dbReference>
<dbReference type="Pfam" id="PF02659">
    <property type="entry name" value="Mntp"/>
    <property type="match status" value="1"/>
</dbReference>
<sequence>MSVVETVLVALALGCDAFAVGMGVGTRFCNPRQIFRLSFHFGLFQMMMPIAGWFVGSRAADLVSTWGPWISFALLLFIGGKMAYESFRSLEAEDGECPDPTKGSSLVMLSVATSMDALGVGFSFGILGQQLFLSAVWIGITAGIMTWGAMRLGNRLSRQFGRRMETVGGLILVAIAVKLLLF</sequence>
<reference key="1">
    <citation type="submission" date="2006-10" db="EMBL/GenBank/DDBJ databases">
        <title>Complete sequence of Syntrophobacter fumaroxidans MPOB.</title>
        <authorList>
            <consortium name="US DOE Joint Genome Institute"/>
            <person name="Copeland A."/>
            <person name="Lucas S."/>
            <person name="Lapidus A."/>
            <person name="Barry K."/>
            <person name="Detter J.C."/>
            <person name="Glavina del Rio T."/>
            <person name="Hammon N."/>
            <person name="Israni S."/>
            <person name="Pitluck S."/>
            <person name="Goltsman E.G."/>
            <person name="Martinez M."/>
            <person name="Schmutz J."/>
            <person name="Larimer F."/>
            <person name="Land M."/>
            <person name="Hauser L."/>
            <person name="Kyrpides N."/>
            <person name="Kim E."/>
            <person name="Boone D.R."/>
            <person name="Brockman F."/>
            <person name="Culley D."/>
            <person name="Ferry J."/>
            <person name="Gunsalus R."/>
            <person name="McInerney M.J."/>
            <person name="Morrison M."/>
            <person name="Plugge C."/>
            <person name="Rohlin L."/>
            <person name="Scholten J."/>
            <person name="Sieber J."/>
            <person name="Stams A.J.M."/>
            <person name="Worm P."/>
            <person name="Henstra A.M."/>
            <person name="Richardson P."/>
        </authorList>
    </citation>
    <scope>NUCLEOTIDE SEQUENCE [LARGE SCALE GENOMIC DNA]</scope>
    <source>
        <strain>DSM 10017 / MPOB</strain>
    </source>
</reference>
<comment type="function">
    <text evidence="1">Probably functions as a manganese efflux pump.</text>
</comment>
<comment type="subcellular location">
    <subcellularLocation>
        <location evidence="1">Cell inner membrane</location>
        <topology evidence="1">Multi-pass membrane protein</topology>
    </subcellularLocation>
</comment>
<comment type="similarity">
    <text evidence="1">Belongs to the MntP (TC 9.B.29) family.</text>
</comment>
<accession>A0LFC9</accession>
<protein>
    <recommendedName>
        <fullName evidence="1">Putative manganese efflux pump MntP</fullName>
    </recommendedName>
</protein>
<keyword id="KW-0997">Cell inner membrane</keyword>
<keyword id="KW-1003">Cell membrane</keyword>
<keyword id="KW-0406">Ion transport</keyword>
<keyword id="KW-0464">Manganese</keyword>
<keyword id="KW-0472">Membrane</keyword>
<keyword id="KW-1185">Reference proteome</keyword>
<keyword id="KW-0812">Transmembrane</keyword>
<keyword id="KW-1133">Transmembrane helix</keyword>
<keyword id="KW-0813">Transport</keyword>
<evidence type="ECO:0000255" key="1">
    <source>
        <dbReference type="HAMAP-Rule" id="MF_01521"/>
    </source>
</evidence>
<name>MNTP_SYNFM</name>